<accession>Q8Z2L4</accession>
<proteinExistence type="inferred from homology"/>
<sequence>MENILKLIARYPLVEDLVALKETTWFNPGATSLAQGLPYVGLTEQDVNAAHDRLARFAPYLAKAFPQTAAAGGIIESDVVAIPAMQKRLEKEYGQTIDGEMLLKKDSHLAISGSIKARGGIYEVLTHAEKLALEAGLLTTDDDYSVLLSPEFKQFFSQYSIAVGSTGNLGLSIGIMSACIGFKVTVHMSADARAWKKAKLRSHGVTVVEYEDDYGVAVEQGRKAAQSDPNCFFIDDENSRTLFLGYAVAGQRLKAQFAQQGRVVDASHPLFVYLPCGVGGGPGGVAFGLKLAFGDNVHCFFAEPTHSPCMLLGVYTGLHDAISVQDIGIDNLTAADGLAVGRASGFVGRAMERLLDGLYTLDDQTMYDMLGWLAQEEGIRLEPSALAGMAGPQRICASVAYQQRHGFSQTQLGNATHLIWATGGGMVPEDEMEQYLAKGR</sequence>
<comment type="catalytic activity">
    <reaction evidence="1">
        <text>D-serine = pyruvate + NH4(+)</text>
        <dbReference type="Rhea" id="RHEA:13977"/>
        <dbReference type="ChEBI" id="CHEBI:15361"/>
        <dbReference type="ChEBI" id="CHEBI:28938"/>
        <dbReference type="ChEBI" id="CHEBI:35247"/>
        <dbReference type="EC" id="4.3.1.18"/>
    </reaction>
</comment>
<comment type="cofactor">
    <cofactor evidence="1">
        <name>pyridoxal 5'-phosphate</name>
        <dbReference type="ChEBI" id="CHEBI:597326"/>
    </cofactor>
</comment>
<comment type="subunit">
    <text evidence="1">Monomer.</text>
</comment>
<comment type="similarity">
    <text evidence="1">Belongs to the serine/threonine dehydratase family. DsdA subfamily.</text>
</comment>
<keyword id="KW-0456">Lyase</keyword>
<keyword id="KW-0663">Pyridoxal phosphate</keyword>
<gene>
    <name evidence="1" type="primary">dsdA</name>
    <name type="ordered locus">STY3977</name>
    <name type="ordered locus">t3715</name>
</gene>
<dbReference type="EC" id="4.3.1.18" evidence="1"/>
<dbReference type="EMBL" id="AL513382">
    <property type="protein sequence ID" value="CAD03191.1"/>
    <property type="molecule type" value="Genomic_DNA"/>
</dbReference>
<dbReference type="EMBL" id="AE014613">
    <property type="protein sequence ID" value="AAO71209.1"/>
    <property type="molecule type" value="Genomic_DNA"/>
</dbReference>
<dbReference type="RefSeq" id="NP_458135.1">
    <property type="nucleotide sequence ID" value="NC_003198.1"/>
</dbReference>
<dbReference type="RefSeq" id="WP_000427787.1">
    <property type="nucleotide sequence ID" value="NZ_QXGZ01000032.1"/>
</dbReference>
<dbReference type="SMR" id="Q8Z2L4"/>
<dbReference type="STRING" id="220341.gene:17587834"/>
<dbReference type="KEGG" id="stt:t3715"/>
<dbReference type="KEGG" id="sty:STY3977"/>
<dbReference type="PATRIC" id="fig|220341.7.peg.4064"/>
<dbReference type="eggNOG" id="COG3048">
    <property type="taxonomic scope" value="Bacteria"/>
</dbReference>
<dbReference type="HOGENOM" id="CLU_035707_0_0_6"/>
<dbReference type="OMA" id="ESDPNCF"/>
<dbReference type="OrthoDB" id="9780546at2"/>
<dbReference type="Proteomes" id="UP000000541">
    <property type="component" value="Chromosome"/>
</dbReference>
<dbReference type="Proteomes" id="UP000002670">
    <property type="component" value="Chromosome"/>
</dbReference>
<dbReference type="GO" id="GO:0008721">
    <property type="term" value="F:D-serine ammonia-lyase activity"/>
    <property type="evidence" value="ECO:0007669"/>
    <property type="project" value="UniProtKB-EC"/>
</dbReference>
<dbReference type="GO" id="GO:0016836">
    <property type="term" value="F:hydro-lyase activity"/>
    <property type="evidence" value="ECO:0007669"/>
    <property type="project" value="UniProtKB-UniRule"/>
</dbReference>
<dbReference type="GO" id="GO:0030170">
    <property type="term" value="F:pyridoxal phosphate binding"/>
    <property type="evidence" value="ECO:0007669"/>
    <property type="project" value="InterPro"/>
</dbReference>
<dbReference type="GO" id="GO:0036088">
    <property type="term" value="P:D-serine catabolic process"/>
    <property type="evidence" value="ECO:0007669"/>
    <property type="project" value="TreeGrafter"/>
</dbReference>
<dbReference type="GO" id="GO:0009097">
    <property type="term" value="P:isoleucine biosynthetic process"/>
    <property type="evidence" value="ECO:0007669"/>
    <property type="project" value="TreeGrafter"/>
</dbReference>
<dbReference type="CDD" id="cd06447">
    <property type="entry name" value="D-Ser-dehyd"/>
    <property type="match status" value="1"/>
</dbReference>
<dbReference type="FunFam" id="3.40.50.1100:FF:000018">
    <property type="entry name" value="D-serine dehydratase"/>
    <property type="match status" value="1"/>
</dbReference>
<dbReference type="Gene3D" id="3.40.50.1100">
    <property type="match status" value="2"/>
</dbReference>
<dbReference type="HAMAP" id="MF_01030">
    <property type="entry name" value="D_Ser_dehydrat"/>
    <property type="match status" value="1"/>
</dbReference>
<dbReference type="InterPro" id="IPR011780">
    <property type="entry name" value="D_Ser_am_lyase"/>
</dbReference>
<dbReference type="InterPro" id="IPR050147">
    <property type="entry name" value="Ser/Thr_Dehydratase"/>
</dbReference>
<dbReference type="InterPro" id="IPR000634">
    <property type="entry name" value="Ser/Thr_deHydtase_PyrdxlP-BS"/>
</dbReference>
<dbReference type="InterPro" id="IPR001926">
    <property type="entry name" value="TrpB-like_PALP"/>
</dbReference>
<dbReference type="InterPro" id="IPR036052">
    <property type="entry name" value="TrpB-like_PALP_sf"/>
</dbReference>
<dbReference type="NCBIfam" id="TIGR02035">
    <property type="entry name" value="D_Ser_am_lyase"/>
    <property type="match status" value="1"/>
</dbReference>
<dbReference type="NCBIfam" id="NF002823">
    <property type="entry name" value="PRK02991.1"/>
    <property type="match status" value="1"/>
</dbReference>
<dbReference type="PANTHER" id="PTHR48078:SF9">
    <property type="entry name" value="D-SERINE DEHYDRATASE"/>
    <property type="match status" value="1"/>
</dbReference>
<dbReference type="PANTHER" id="PTHR48078">
    <property type="entry name" value="THREONINE DEHYDRATASE, MITOCHONDRIAL-RELATED"/>
    <property type="match status" value="1"/>
</dbReference>
<dbReference type="Pfam" id="PF00291">
    <property type="entry name" value="PALP"/>
    <property type="match status" value="1"/>
</dbReference>
<dbReference type="SUPFAM" id="SSF53686">
    <property type="entry name" value="Tryptophan synthase beta subunit-like PLP-dependent enzymes"/>
    <property type="match status" value="1"/>
</dbReference>
<dbReference type="PROSITE" id="PS00165">
    <property type="entry name" value="DEHYDRATASE_SER_THR"/>
    <property type="match status" value="1"/>
</dbReference>
<evidence type="ECO:0000255" key="1">
    <source>
        <dbReference type="HAMAP-Rule" id="MF_01030"/>
    </source>
</evidence>
<protein>
    <recommendedName>
        <fullName evidence="1">D-serine dehydratase</fullName>
        <ecNumber evidence="1">4.3.1.18</ecNumber>
    </recommendedName>
    <alternativeName>
        <fullName evidence="1">D-serine deaminase</fullName>
        <shortName evidence="1">DSD</shortName>
    </alternativeName>
</protein>
<reference key="1">
    <citation type="journal article" date="2001" name="Nature">
        <title>Complete genome sequence of a multiple drug resistant Salmonella enterica serovar Typhi CT18.</title>
        <authorList>
            <person name="Parkhill J."/>
            <person name="Dougan G."/>
            <person name="James K.D."/>
            <person name="Thomson N.R."/>
            <person name="Pickard D."/>
            <person name="Wain J."/>
            <person name="Churcher C.M."/>
            <person name="Mungall K.L."/>
            <person name="Bentley S.D."/>
            <person name="Holden M.T.G."/>
            <person name="Sebaihia M."/>
            <person name="Baker S."/>
            <person name="Basham D."/>
            <person name="Brooks K."/>
            <person name="Chillingworth T."/>
            <person name="Connerton P."/>
            <person name="Cronin A."/>
            <person name="Davis P."/>
            <person name="Davies R.M."/>
            <person name="Dowd L."/>
            <person name="White N."/>
            <person name="Farrar J."/>
            <person name="Feltwell T."/>
            <person name="Hamlin N."/>
            <person name="Haque A."/>
            <person name="Hien T.T."/>
            <person name="Holroyd S."/>
            <person name="Jagels K."/>
            <person name="Krogh A."/>
            <person name="Larsen T.S."/>
            <person name="Leather S."/>
            <person name="Moule S."/>
            <person name="O'Gaora P."/>
            <person name="Parry C."/>
            <person name="Quail M.A."/>
            <person name="Rutherford K.M."/>
            <person name="Simmonds M."/>
            <person name="Skelton J."/>
            <person name="Stevens K."/>
            <person name="Whitehead S."/>
            <person name="Barrell B.G."/>
        </authorList>
    </citation>
    <scope>NUCLEOTIDE SEQUENCE [LARGE SCALE GENOMIC DNA]</scope>
    <source>
        <strain>CT18</strain>
    </source>
</reference>
<reference key="2">
    <citation type="journal article" date="2003" name="J. Bacteriol.">
        <title>Comparative genomics of Salmonella enterica serovar Typhi strains Ty2 and CT18.</title>
        <authorList>
            <person name="Deng W."/>
            <person name="Liou S.-R."/>
            <person name="Plunkett G. III"/>
            <person name="Mayhew G.F."/>
            <person name="Rose D.J."/>
            <person name="Burland V."/>
            <person name="Kodoyianni V."/>
            <person name="Schwartz D.C."/>
            <person name="Blattner F.R."/>
        </authorList>
    </citation>
    <scope>NUCLEOTIDE SEQUENCE [LARGE SCALE GENOMIC DNA]</scope>
    <source>
        <strain>ATCC 700931 / Ty2</strain>
    </source>
</reference>
<organism>
    <name type="scientific">Salmonella typhi</name>
    <dbReference type="NCBI Taxonomy" id="90370"/>
    <lineage>
        <taxon>Bacteria</taxon>
        <taxon>Pseudomonadati</taxon>
        <taxon>Pseudomonadota</taxon>
        <taxon>Gammaproteobacteria</taxon>
        <taxon>Enterobacterales</taxon>
        <taxon>Enterobacteriaceae</taxon>
        <taxon>Salmonella</taxon>
    </lineage>
</organism>
<name>SDHD_SALTI</name>
<feature type="chain" id="PRO_0000185619" description="D-serine dehydratase">
    <location>
        <begin position="1"/>
        <end position="440"/>
    </location>
</feature>
<feature type="modified residue" description="N6-(pyridoxal phosphate)lysine" evidence="1">
    <location>
        <position position="116"/>
    </location>
</feature>